<name>PYTH_ASPTN</name>
<comment type="function">
    <text evidence="4 7">Aspartic protease-like protein; part of the gene cluster that mediates the biosynthesis of pyranterreones, a family of antioxidative compounds (PubMed:32077283). The first step of pyranonigrins biosynthesis is performed by the hybrid PKS-NRPS synthetase pytA that condenses 4 malonyl-CoA units ato the acetyl starter unit by the modular PKS of pytA (PubMed:32077283). The acyl chain is then connected to an L-serine through the amide bond by the modular NRPS of pytA (PubMed:32077283). A tetramic acid is formed and released from the PKS-NRPS pytA to give pyranterreone 5 with the help of the thioesterase pytI (PubMed:32077283). Pyranterreone 5 could be methylated by pytC to afford pyranterreone 6 (Probable). Both pyranterreones 5 and 6 are subsequently oxidized by the FAD-linked oxidoreductase pytB and the cytochrome P450 monooxygenase pytD to form the fused gamma-pyrone core, resulting in pyranterreones 7 and 11, respectively (PubMed:32077283). The hydroxy group at C-8 of pyranterreones 7 and 11 are dehydrated by the aspartyl protease pytH to form a delta-7 double bond to give pyranterreones 3 and 1, 2 accordingly (PubMed:32077283). The exo-methylene of pyranterreone 3 could be reduced into a pendant methyl by reductase pytE to provide pyranterreone 4, also known as cordylactam (Probable). Pyranterreone 4 can be reconverted to pyranterreone 3 through pytB-catalyzed dehydrogenation or further oxidized to pyranterreones 9 and 10 (Probable).</text>
</comment>
<comment type="pathway">
    <text evidence="4">Secondary metabolite biosynthesis.</text>
</comment>
<comment type="induction">
    <text evidence="4">Expression is positively regulated by the cluster-specific transcription factor pytR.</text>
</comment>
<comment type="disruption phenotype">
    <text evidence="4">Abolishes the production of most pyranterreones, but accumulates pyranterreones 7 and 8.</text>
</comment>
<comment type="similarity">
    <text evidence="6">Belongs to the peptidase A1 family.</text>
</comment>
<dbReference type="EC" id="3.4.23.-" evidence="7"/>
<dbReference type="EMBL" id="CH476594">
    <property type="protein sequence ID" value="EAU39563.1"/>
    <property type="molecule type" value="Genomic_DNA"/>
</dbReference>
<dbReference type="RefSeq" id="XP_001211003.1">
    <property type="nucleotide sequence ID" value="XM_001211003.1"/>
</dbReference>
<dbReference type="SMR" id="Q0CZG7"/>
<dbReference type="STRING" id="341663.Q0CZG7"/>
<dbReference type="GlyCosmos" id="Q0CZG7">
    <property type="glycosylation" value="7 sites, No reported glycans"/>
</dbReference>
<dbReference type="EnsemblFungi" id="EAU39563">
    <property type="protein sequence ID" value="EAU39563"/>
    <property type="gene ID" value="ATEG_00917"/>
</dbReference>
<dbReference type="GeneID" id="4355680"/>
<dbReference type="VEuPathDB" id="FungiDB:ATEG_00917"/>
<dbReference type="eggNOG" id="KOG1339">
    <property type="taxonomic scope" value="Eukaryota"/>
</dbReference>
<dbReference type="HOGENOM" id="CLU_039077_0_0_1"/>
<dbReference type="OMA" id="FVDWTWI"/>
<dbReference type="OrthoDB" id="771136at2759"/>
<dbReference type="Proteomes" id="UP000007963">
    <property type="component" value="Unassembled WGS sequence"/>
</dbReference>
<dbReference type="GO" id="GO:0004190">
    <property type="term" value="F:aspartic-type endopeptidase activity"/>
    <property type="evidence" value="ECO:0007669"/>
    <property type="project" value="UniProtKB-KW"/>
</dbReference>
<dbReference type="GO" id="GO:0006508">
    <property type="term" value="P:proteolysis"/>
    <property type="evidence" value="ECO:0007669"/>
    <property type="project" value="UniProtKB-KW"/>
</dbReference>
<dbReference type="CDD" id="cd05471">
    <property type="entry name" value="pepsin_like"/>
    <property type="match status" value="1"/>
</dbReference>
<dbReference type="Gene3D" id="2.40.70.10">
    <property type="entry name" value="Acid Proteases"/>
    <property type="match status" value="2"/>
</dbReference>
<dbReference type="InterPro" id="IPR001461">
    <property type="entry name" value="Aspartic_peptidase_A1"/>
</dbReference>
<dbReference type="InterPro" id="IPR034164">
    <property type="entry name" value="Pepsin-like_dom"/>
</dbReference>
<dbReference type="InterPro" id="IPR033121">
    <property type="entry name" value="PEPTIDASE_A1"/>
</dbReference>
<dbReference type="InterPro" id="IPR021109">
    <property type="entry name" value="Peptidase_aspartic_dom_sf"/>
</dbReference>
<dbReference type="PANTHER" id="PTHR47966">
    <property type="entry name" value="BETA-SITE APP-CLEAVING ENZYME, ISOFORM A-RELATED"/>
    <property type="match status" value="1"/>
</dbReference>
<dbReference type="PANTHER" id="PTHR47966:SF51">
    <property type="entry name" value="BETA-SITE APP-CLEAVING ENZYME, ISOFORM A-RELATED"/>
    <property type="match status" value="1"/>
</dbReference>
<dbReference type="Pfam" id="PF00026">
    <property type="entry name" value="Asp"/>
    <property type="match status" value="1"/>
</dbReference>
<dbReference type="SUPFAM" id="SSF50630">
    <property type="entry name" value="Acid proteases"/>
    <property type="match status" value="1"/>
</dbReference>
<dbReference type="PROSITE" id="PS51767">
    <property type="entry name" value="PEPTIDASE_A1"/>
    <property type="match status" value="1"/>
</dbReference>
<proteinExistence type="evidence at transcript level"/>
<keyword id="KW-0064">Aspartyl protease</keyword>
<keyword id="KW-1015">Disulfide bond</keyword>
<keyword id="KW-0325">Glycoprotein</keyword>
<keyword id="KW-0378">Hydrolase</keyword>
<keyword id="KW-0645">Protease</keyword>
<keyword id="KW-1185">Reference proteome</keyword>
<keyword id="KW-0732">Signal</keyword>
<reference key="1">
    <citation type="submission" date="2005-09" db="EMBL/GenBank/DDBJ databases">
        <title>Annotation of the Aspergillus terreus NIH2624 genome.</title>
        <authorList>
            <person name="Birren B.W."/>
            <person name="Lander E.S."/>
            <person name="Galagan J.E."/>
            <person name="Nusbaum C."/>
            <person name="Devon K."/>
            <person name="Henn M."/>
            <person name="Ma L.-J."/>
            <person name="Jaffe D.B."/>
            <person name="Butler J."/>
            <person name="Alvarez P."/>
            <person name="Gnerre S."/>
            <person name="Grabherr M."/>
            <person name="Kleber M."/>
            <person name="Mauceli E.W."/>
            <person name="Brockman W."/>
            <person name="Rounsley S."/>
            <person name="Young S.K."/>
            <person name="LaButti K."/>
            <person name="Pushparaj V."/>
            <person name="DeCaprio D."/>
            <person name="Crawford M."/>
            <person name="Koehrsen M."/>
            <person name="Engels R."/>
            <person name="Montgomery P."/>
            <person name="Pearson M."/>
            <person name="Howarth C."/>
            <person name="Larson L."/>
            <person name="Luoma S."/>
            <person name="White J."/>
            <person name="Alvarado L."/>
            <person name="Kodira C.D."/>
            <person name="Zeng Q."/>
            <person name="Oleary S."/>
            <person name="Yandava C."/>
            <person name="Denning D.W."/>
            <person name="Nierman W.C."/>
            <person name="Milne T."/>
            <person name="Madden K."/>
        </authorList>
    </citation>
    <scope>NUCLEOTIDE SEQUENCE [LARGE SCALE GENOMIC DNA]</scope>
    <source>
        <strain>NIH 2624 / FGSC A1156</strain>
    </source>
</reference>
<reference key="2">
    <citation type="journal article" date="2020" name="J. Nat. Prod.">
        <title>Discovery and characterization of a PKS-NRPS hybrid in Aspergillus terreus by genome mining.</title>
        <authorList>
            <person name="Tang S."/>
            <person name="Zhang W."/>
            <person name="Li Z."/>
            <person name="Li H."/>
            <person name="Geng C."/>
            <person name="Huang X."/>
            <person name="Lu X."/>
        </authorList>
    </citation>
    <scope>INDUCTION</scope>
    <scope>FUNCTION</scope>
    <scope>DISRUPTION PHENOTYPE</scope>
    <scope>PATHWAY</scope>
</reference>
<evidence type="ECO:0000255" key="1"/>
<evidence type="ECO:0000255" key="2">
    <source>
        <dbReference type="PROSITE-ProRule" id="PRU00498"/>
    </source>
</evidence>
<evidence type="ECO:0000255" key="3">
    <source>
        <dbReference type="PROSITE-ProRule" id="PRU01103"/>
    </source>
</evidence>
<evidence type="ECO:0000269" key="4">
    <source>
    </source>
</evidence>
<evidence type="ECO:0000303" key="5">
    <source>
    </source>
</evidence>
<evidence type="ECO:0000305" key="6"/>
<evidence type="ECO:0000305" key="7">
    <source>
    </source>
</evidence>
<organism>
    <name type="scientific">Aspergillus terreus (strain NIH 2624 / FGSC A1156)</name>
    <dbReference type="NCBI Taxonomy" id="341663"/>
    <lineage>
        <taxon>Eukaryota</taxon>
        <taxon>Fungi</taxon>
        <taxon>Dikarya</taxon>
        <taxon>Ascomycota</taxon>
        <taxon>Pezizomycotina</taxon>
        <taxon>Eurotiomycetes</taxon>
        <taxon>Eurotiomycetidae</taxon>
        <taxon>Eurotiales</taxon>
        <taxon>Aspergillaceae</taxon>
        <taxon>Aspergillus</taxon>
        <taxon>Aspergillus subgen. Circumdati</taxon>
    </lineage>
</organism>
<accession>Q0CZG7</accession>
<protein>
    <recommendedName>
        <fullName evidence="5">Aspartic protease-like protein pytH</fullName>
        <ecNumber evidence="7">3.4.23.-</ecNumber>
    </recommendedName>
    <alternativeName>
        <fullName evidence="5">Pyranterreones biosynthesis cluster protein H</fullName>
    </alternativeName>
</protein>
<gene>
    <name evidence="5" type="primary">pytH</name>
    <name type="ORF">ATEG_00917</name>
</gene>
<sequence>MWLSVALLTLLDGALAAPARQHSGAFDMPLTWTPFGFTTDAIQIGTPPQPLVCFVDWTWIGQYAFTPRCHGGSQGTYACLQHGQPLYNETESRTFANQSVLYPERTWNPNHFFFYNDLSVGFGSDIERVGPDHQARVTLQLADMHFQLDMVYPFGGVYGLSPVFKSDNASTQSPFYQMWQQGVYRSPLVSFVYCHNSTFDQPTPRRELCHGKDGLQTLGGPSPVLSLSDKNNSSPILWYDNIVFPPVNEIEFVYQPAVYNYWALRLTRHLIGDEEQALNTSIGGNPGAIFDHASYGRGVPMSENSYRRLIEITGGRPVVLDANVAPNNGNQSFVSVDCEKVSSFPNVKYVFEGHDRVWEVTPANYVERREVDGKEVCVLNVRTLGEGDWIIGNFGETFAKDKVVLFDFDKLRVGLADVPAAAY</sequence>
<feature type="signal peptide" evidence="1">
    <location>
        <begin position="1"/>
        <end position="16"/>
    </location>
</feature>
<feature type="chain" id="PRO_5004170777" description="Aspartic protease-like protein pytH">
    <location>
        <begin position="17"/>
        <end position="423"/>
    </location>
</feature>
<feature type="domain" description="Peptidase A1" evidence="3">
    <location>
        <begin position="38"/>
        <end position="416"/>
    </location>
</feature>
<feature type="active site" evidence="3">
    <location>
        <position position="56"/>
    </location>
</feature>
<feature type="active site" evidence="3">
    <location>
        <position position="291"/>
    </location>
</feature>
<feature type="glycosylation site" description="N-linked (GlcNAc...) asparagine" evidence="2">
    <location>
        <position position="88"/>
    </location>
</feature>
<feature type="glycosylation site" description="N-linked (GlcNAc...) asparagine" evidence="2">
    <location>
        <position position="97"/>
    </location>
</feature>
<feature type="glycosylation site" description="N-linked (GlcNAc...) asparagine" evidence="2">
    <location>
        <position position="168"/>
    </location>
</feature>
<feature type="glycosylation site" description="N-linked (GlcNAc...) asparagine" evidence="2">
    <location>
        <position position="196"/>
    </location>
</feature>
<feature type="glycosylation site" description="N-linked (GlcNAc...) asparagine" evidence="2">
    <location>
        <position position="231"/>
    </location>
</feature>
<feature type="glycosylation site" description="N-linked (GlcNAc...) asparagine" evidence="2">
    <location>
        <position position="279"/>
    </location>
</feature>
<feature type="glycosylation site" description="N-linked (GlcNAc...) asparagine" evidence="2">
    <location>
        <position position="330"/>
    </location>
</feature>
<feature type="disulfide bond" evidence="3">
    <location>
        <begin position="338"/>
        <end position="377"/>
    </location>
</feature>